<dbReference type="PIR" id="A25860">
    <property type="entry name" value="A25860"/>
</dbReference>
<dbReference type="SMR" id="P10453"/>
<dbReference type="GO" id="GO:0005576">
    <property type="term" value="C:extracellular region"/>
    <property type="evidence" value="ECO:0007669"/>
    <property type="project" value="UniProtKB-SubCell"/>
</dbReference>
<dbReference type="GO" id="GO:0042151">
    <property type="term" value="C:nematocyst"/>
    <property type="evidence" value="ECO:0007669"/>
    <property type="project" value="UniProtKB-SubCell"/>
</dbReference>
<dbReference type="GO" id="GO:0017080">
    <property type="term" value="F:sodium channel regulator activity"/>
    <property type="evidence" value="ECO:0007669"/>
    <property type="project" value="UniProtKB-KW"/>
</dbReference>
<dbReference type="GO" id="GO:0090729">
    <property type="term" value="F:toxin activity"/>
    <property type="evidence" value="ECO:0007669"/>
    <property type="project" value="UniProtKB-KW"/>
</dbReference>
<dbReference type="GO" id="GO:0009966">
    <property type="term" value="P:regulation of signal transduction"/>
    <property type="evidence" value="ECO:0007669"/>
    <property type="project" value="InterPro"/>
</dbReference>
<dbReference type="Gene3D" id="2.20.20.10">
    <property type="entry name" value="Anthopleurin-A"/>
    <property type="match status" value="1"/>
</dbReference>
<dbReference type="InterPro" id="IPR000693">
    <property type="entry name" value="Anenome_toxin"/>
</dbReference>
<dbReference type="InterPro" id="IPR023355">
    <property type="entry name" value="Myo_ane_neurotoxin_sf"/>
</dbReference>
<dbReference type="Pfam" id="PF00706">
    <property type="entry name" value="Toxin_4"/>
    <property type="match status" value="1"/>
</dbReference>
<dbReference type="PIRSF" id="PIRSF001905">
    <property type="entry name" value="Anenome_toxin"/>
    <property type="match status" value="1"/>
</dbReference>
<dbReference type="SUPFAM" id="SSF57392">
    <property type="entry name" value="Defensin-like"/>
    <property type="match status" value="1"/>
</dbReference>
<feature type="chain" id="PRO_0000221518" description="Delta-actitoxin-Afv1a" evidence="2">
    <location>
        <begin position="1"/>
        <end position="47"/>
    </location>
</feature>
<feature type="disulfide bond" evidence="2">
    <location>
        <begin position="4"/>
        <end position="44"/>
    </location>
</feature>
<feature type="disulfide bond" evidence="2">
    <location>
        <begin position="6"/>
        <end position="34"/>
    </location>
</feature>
<feature type="disulfide bond" evidence="2">
    <location>
        <begin position="27"/>
        <end position="45"/>
    </location>
</feature>
<protein>
    <recommendedName>
        <fullName evidence="3">Delta-actitoxin-Afv1a</fullName>
        <shortName evidence="3">Delta-AITX-Afv1a</shortName>
    </recommendedName>
    <alternativeName>
        <fullName evidence="4">Toxin AFT-I</fullName>
        <shortName>AFI</shortName>
    </alternativeName>
</protein>
<proteinExistence type="evidence at protein level"/>
<sequence length="47" mass="4873">GVACLCDSDGPNVRGNTLSGTIWLAGCPSGWHNCKAHGPTIGWCCKQ</sequence>
<evidence type="ECO:0000250" key="1">
    <source>
        <dbReference type="UniProtKB" id="P10454"/>
    </source>
</evidence>
<evidence type="ECO:0000269" key="2">
    <source>
    </source>
</evidence>
<evidence type="ECO:0000303" key="3">
    <source>
    </source>
</evidence>
<evidence type="ECO:0000303" key="4">
    <source>
    </source>
</evidence>
<evidence type="ECO:0000305" key="5"/>
<organism>
    <name type="scientific">Anthopleura fuscoviridis</name>
    <name type="common">Sea anemone</name>
    <dbReference type="NCBI Taxonomy" id="6111"/>
    <lineage>
        <taxon>Eukaryota</taxon>
        <taxon>Metazoa</taxon>
        <taxon>Cnidaria</taxon>
        <taxon>Anthozoa</taxon>
        <taxon>Hexacorallia</taxon>
        <taxon>Actiniaria</taxon>
        <taxon>Actiniidae</taxon>
        <taxon>Anthopleura</taxon>
    </lineage>
</organism>
<name>NA11_ANTFU</name>
<keyword id="KW-0123">Cardiotoxin</keyword>
<keyword id="KW-0903">Direct protein sequencing</keyword>
<keyword id="KW-1015">Disulfide bond</keyword>
<keyword id="KW-0872">Ion channel impairing toxin</keyword>
<keyword id="KW-0166">Nematocyst</keyword>
<keyword id="KW-0528">Neurotoxin</keyword>
<keyword id="KW-0964">Secreted</keyword>
<keyword id="KW-0800">Toxin</keyword>
<keyword id="KW-0738">Voltage-gated sodium channel impairing toxin</keyword>
<accession>P10453</accession>
<comment type="function">
    <text evidence="1">Binds specifically to voltage-gated sodium channels (Nav), thereby delaying their inactivation. This toxin is active on a variety of voltage-gated sodium channels (Nav1.1/SCN1A, Nav1.2/SCN2A, Nav1.3/SCN3A, Nav1.4/SCN4A, Nav1.5/SCN5A and Nav1.6/SCN8A).</text>
</comment>
<comment type="subcellular location">
    <subcellularLocation>
        <location evidence="1">Secreted</location>
    </subcellularLocation>
    <subcellularLocation>
        <location evidence="1">Nematocyst</location>
    </subcellularLocation>
</comment>
<comment type="similarity">
    <text evidence="5">Belongs to the sea anemone sodium channel inhibitory toxin family. Type I subfamily.</text>
</comment>
<reference key="1">
    <citation type="journal article" date="1987" name="Toxicon">
        <title>Amino acid sequence of two sea anemone toxins from Anthopleura fuscoviridis.</title>
        <authorList>
            <person name="Sunahara S."/>
            <person name="Muramoto K."/>
            <person name="Tenma K."/>
            <person name="Kamiya H."/>
        </authorList>
    </citation>
    <scope>PROTEIN SEQUENCE</scope>
    <scope>DISULFIDE BONDS</scope>
    <source>
        <tissue>Nematoblast</tissue>
    </source>
</reference>
<reference key="2">
    <citation type="journal article" date="2012" name="Toxicon">
        <title>Development of a rational nomenclature for naming peptide and protein toxins from sea anemones.</title>
        <authorList>
            <person name="Oliveira J.S."/>
            <person name="Fuentes-Silva D."/>
            <person name="King G.F."/>
        </authorList>
    </citation>
    <scope>NOMENCLATURE</scope>
</reference>